<proteinExistence type="evidence at protein level"/>
<feature type="chain" id="PRO_0000130818" description="Small ribosomal subunit protein eS4, Y isoform 2">
    <location>
        <begin position="1"/>
        <end position="263"/>
    </location>
</feature>
<feature type="domain" description="S4 RNA-binding">
    <location>
        <begin position="42"/>
        <end position="104"/>
    </location>
</feature>
<reference key="1">
    <citation type="journal article" date="2003" name="Nature">
        <title>The male-specific region of the human Y chromosome is a mosaic of discrete sequence classes.</title>
        <authorList>
            <person name="Skaletsky H."/>
            <person name="Kuroda-Kawaguchi T."/>
            <person name="Minx P.J."/>
            <person name="Cordum H.S."/>
            <person name="Hillier L.W."/>
            <person name="Brown L.G."/>
            <person name="Repping S."/>
            <person name="Pyntikova T."/>
            <person name="Ali J."/>
            <person name="Bieri T."/>
            <person name="Chinwalla A."/>
            <person name="Delehaunty A."/>
            <person name="Delehaunty K."/>
            <person name="Du H."/>
            <person name="Fewell G."/>
            <person name="Fulton L."/>
            <person name="Fulton R."/>
            <person name="Graves T.A."/>
            <person name="Hou S.-F."/>
            <person name="Latrielle P."/>
            <person name="Leonard S."/>
            <person name="Mardis E."/>
            <person name="Maupin R."/>
            <person name="McPherson J."/>
            <person name="Miner T."/>
            <person name="Nash W."/>
            <person name="Nguyen C."/>
            <person name="Ozersky P."/>
            <person name="Pepin K."/>
            <person name="Rock S."/>
            <person name="Rohlfing T."/>
            <person name="Scott K."/>
            <person name="Schultz B."/>
            <person name="Strong C."/>
            <person name="Tin-Wollam A."/>
            <person name="Yang S.-P."/>
            <person name="Waterston R.H."/>
            <person name="Wilson R.K."/>
            <person name="Rozen S."/>
            <person name="Page D.C."/>
        </authorList>
    </citation>
    <scope>NUCLEOTIDE SEQUENCE [LARGE SCALE GENOMIC DNA / MRNA]</scope>
</reference>
<reference key="2">
    <citation type="journal article" date="2014" name="Curr. Opin. Struct. Biol.">
        <title>A new system for naming ribosomal proteins.</title>
        <authorList>
            <person name="Ban N."/>
            <person name="Beckmann R."/>
            <person name="Cate J.H.D."/>
            <person name="Dinman J.D."/>
            <person name="Dragon F."/>
            <person name="Ellis S.R."/>
            <person name="Lafontaine D.L.J."/>
            <person name="Lindahl L."/>
            <person name="Liljas A."/>
            <person name="Lipton J.M."/>
            <person name="McAlear M.A."/>
            <person name="Moore P.B."/>
            <person name="Noller H.F."/>
            <person name="Ortega J."/>
            <person name="Panse V.G."/>
            <person name="Ramakrishnan V."/>
            <person name="Spahn C.M.T."/>
            <person name="Steitz T.A."/>
            <person name="Tchorzewski M."/>
            <person name="Tollervey D."/>
            <person name="Warren A.J."/>
            <person name="Williamson J.R."/>
            <person name="Wilson D."/>
            <person name="Yonath A."/>
            <person name="Yusupov M."/>
        </authorList>
    </citation>
    <scope>NOMENCLATURE</scope>
</reference>
<comment type="similarity">
    <text evidence="2">Belongs to the eukaryotic ribosomal protein eS4 family.</text>
</comment>
<evidence type="ECO:0000303" key="1">
    <source>
    </source>
</evidence>
<evidence type="ECO:0000305" key="2"/>
<sequence length="263" mass="29295">MARGPKKHLKRVAAPKHWMLDKLTGVFAPRPSTGPHKLRECLPLIVFLRNRLKYALTGDEVKKICMQHFLKIDGKVRVDITYPAGFIDVISIEKTGEHFRLVYNTKGCFAVHRITVEEAKYKLCKVRKITVGTKGIPHLVTHDARTIRYPDPLIKVNDTVQIDLGTGKITSFIKFDTGNVCMVIAGANLGRVGVITNRERHPGSCDVVHVKDANGNSFATRISNIFVIGNGNKPWISLPRGKGIRLTIAEERDKRLAAKQSSG</sequence>
<protein>
    <recommendedName>
        <fullName evidence="1">Small ribosomal subunit protein eS4, Y isoform 2</fullName>
    </recommendedName>
    <alternativeName>
        <fullName>40S ribosomal protein S4, Y isoform 2</fullName>
    </alternativeName>
</protein>
<accession>Q8TD47</accession>
<accession>A6NIR6</accession>
<gene>
    <name type="primary">RPS4Y2</name>
    <name type="synonym">RPS4Y2P</name>
</gene>
<organism>
    <name type="scientific">Homo sapiens</name>
    <name type="common">Human</name>
    <dbReference type="NCBI Taxonomy" id="9606"/>
    <lineage>
        <taxon>Eukaryota</taxon>
        <taxon>Metazoa</taxon>
        <taxon>Chordata</taxon>
        <taxon>Craniata</taxon>
        <taxon>Vertebrata</taxon>
        <taxon>Euteleostomi</taxon>
        <taxon>Mammalia</taxon>
        <taxon>Eutheria</taxon>
        <taxon>Euarchontoglires</taxon>
        <taxon>Primates</taxon>
        <taxon>Haplorrhini</taxon>
        <taxon>Catarrhini</taxon>
        <taxon>Hominidae</taxon>
        <taxon>Homo</taxon>
    </lineage>
</organism>
<name>RS4Y2_HUMAN</name>
<keyword id="KW-1267">Proteomics identification</keyword>
<keyword id="KW-1185">Reference proteome</keyword>
<keyword id="KW-0687">Ribonucleoprotein</keyword>
<keyword id="KW-0689">Ribosomal protein</keyword>
<keyword id="KW-0694">RNA-binding</keyword>
<keyword id="KW-0699">rRNA-binding</keyword>
<dbReference type="EMBL" id="AC009494">
    <property type="status" value="NOT_ANNOTATED_CDS"/>
    <property type="molecule type" value="Genomic_DNA"/>
</dbReference>
<dbReference type="EMBL" id="AF497481">
    <property type="protein sequence ID" value="AAM18074.1"/>
    <property type="molecule type" value="mRNA"/>
</dbReference>
<dbReference type="CCDS" id="CCDS44028.1"/>
<dbReference type="RefSeq" id="NP_001034656.1">
    <property type="nucleotide sequence ID" value="NM_001039567.3"/>
</dbReference>
<dbReference type="SMR" id="Q8TD47"/>
<dbReference type="BioGRID" id="126595">
    <property type="interactions" value="145"/>
</dbReference>
<dbReference type="FunCoup" id="Q8TD47">
    <property type="interactions" value="190"/>
</dbReference>
<dbReference type="IntAct" id="Q8TD47">
    <property type="interactions" value="51"/>
</dbReference>
<dbReference type="STRING" id="9606.ENSP00000486252"/>
<dbReference type="iPTMnet" id="Q8TD47"/>
<dbReference type="PhosphoSitePlus" id="Q8TD47"/>
<dbReference type="SwissPalm" id="Q8TD47"/>
<dbReference type="BioMuta" id="RPS4Y2"/>
<dbReference type="DMDM" id="27805713"/>
<dbReference type="jPOST" id="Q8TD47"/>
<dbReference type="MassIVE" id="Q8TD47"/>
<dbReference type="PeptideAtlas" id="Q8TD47"/>
<dbReference type="ProteomicsDB" id="74240"/>
<dbReference type="Pumba" id="Q8TD47"/>
<dbReference type="TopDownProteomics" id="Q8TD47"/>
<dbReference type="Antibodypedia" id="75451">
    <property type="antibodies" value="26 antibodies from 10 providers"/>
</dbReference>
<dbReference type="DNASU" id="140032"/>
<dbReference type="Ensembl" id="ENST00000629237.2">
    <property type="protein sequence ID" value="ENSP00000486252.1"/>
    <property type="gene ID" value="ENSG00000280969.2"/>
</dbReference>
<dbReference type="GeneID" id="140032"/>
<dbReference type="KEGG" id="hsa:140032"/>
<dbReference type="MANE-Select" id="ENST00000629237.2">
    <property type="protein sequence ID" value="ENSP00000486252.1"/>
    <property type="RefSeq nucleotide sequence ID" value="NM_001039567.3"/>
    <property type="RefSeq protein sequence ID" value="NP_001034656.1"/>
</dbReference>
<dbReference type="UCSC" id="uc011nbb.3">
    <property type="organism name" value="human"/>
</dbReference>
<dbReference type="AGR" id="HGNC:18501"/>
<dbReference type="CTD" id="140032"/>
<dbReference type="DisGeNET" id="140032"/>
<dbReference type="GeneCards" id="RPS4Y2"/>
<dbReference type="GeneReviews" id="RPS4Y2"/>
<dbReference type="HGNC" id="HGNC:18501">
    <property type="gene designation" value="RPS4Y2"/>
</dbReference>
<dbReference type="HPA" id="ENSG00000280969">
    <property type="expression patterns" value="Group enriched (prostate, testis)"/>
</dbReference>
<dbReference type="MIM" id="400030">
    <property type="type" value="gene"/>
</dbReference>
<dbReference type="neXtProt" id="NX_Q8TD47"/>
<dbReference type="OpenTargets" id="ENSG00000280969"/>
<dbReference type="PharmGKB" id="PA38563"/>
<dbReference type="VEuPathDB" id="HostDB:ENSG00000280969"/>
<dbReference type="GeneTree" id="ENSGT00390000005569"/>
<dbReference type="HOGENOM" id="CLU_060400_1_0_1"/>
<dbReference type="InParanoid" id="Q8TD47"/>
<dbReference type="OMA" id="HPGSCDV"/>
<dbReference type="PAN-GO" id="Q8TD47">
    <property type="GO annotations" value="4 GO annotations based on evolutionary models"/>
</dbReference>
<dbReference type="PhylomeDB" id="Q8TD47"/>
<dbReference type="TreeFam" id="TF300612"/>
<dbReference type="PathwayCommons" id="Q8TD47"/>
<dbReference type="Reactome" id="R-HSA-156827">
    <property type="pathway name" value="L13a-mediated translational silencing of Ceruloplasmin expression"/>
</dbReference>
<dbReference type="Reactome" id="R-HSA-156902">
    <property type="pathway name" value="Peptide chain elongation"/>
</dbReference>
<dbReference type="Reactome" id="R-HSA-1799339">
    <property type="pathway name" value="SRP-dependent cotranslational protein targeting to membrane"/>
</dbReference>
<dbReference type="Reactome" id="R-HSA-192823">
    <property type="pathway name" value="Viral mRNA Translation"/>
</dbReference>
<dbReference type="Reactome" id="R-HSA-2408557">
    <property type="pathway name" value="Selenocysteine synthesis"/>
</dbReference>
<dbReference type="Reactome" id="R-HSA-6791226">
    <property type="pathway name" value="Major pathway of rRNA processing in the nucleolus and cytosol"/>
</dbReference>
<dbReference type="Reactome" id="R-HSA-72649">
    <property type="pathway name" value="Translation initiation complex formation"/>
</dbReference>
<dbReference type="Reactome" id="R-HSA-72689">
    <property type="pathway name" value="Formation of a pool of free 40S subunits"/>
</dbReference>
<dbReference type="Reactome" id="R-HSA-72695">
    <property type="pathway name" value="Formation of the ternary complex, and subsequently, the 43S complex"/>
</dbReference>
<dbReference type="Reactome" id="R-HSA-72702">
    <property type="pathway name" value="Ribosomal scanning and start codon recognition"/>
</dbReference>
<dbReference type="Reactome" id="R-HSA-72706">
    <property type="pathway name" value="GTP hydrolysis and joining of the 60S ribosomal subunit"/>
</dbReference>
<dbReference type="Reactome" id="R-HSA-72764">
    <property type="pathway name" value="Eukaryotic Translation Termination"/>
</dbReference>
<dbReference type="Reactome" id="R-HSA-9010553">
    <property type="pathway name" value="Regulation of expression of SLITs and ROBOs"/>
</dbReference>
<dbReference type="Reactome" id="R-HSA-9633012">
    <property type="pathway name" value="Response of EIF2AK4 (GCN2) to amino acid deficiency"/>
</dbReference>
<dbReference type="Reactome" id="R-HSA-9735869">
    <property type="pathway name" value="SARS-CoV-1 modulates host translation machinery"/>
</dbReference>
<dbReference type="Reactome" id="R-HSA-9754678">
    <property type="pathway name" value="SARS-CoV-2 modulates host translation machinery"/>
</dbReference>
<dbReference type="Reactome" id="R-HSA-975956">
    <property type="pathway name" value="Nonsense Mediated Decay (NMD) independent of the Exon Junction Complex (EJC)"/>
</dbReference>
<dbReference type="Reactome" id="R-HSA-975957">
    <property type="pathway name" value="Nonsense Mediated Decay (NMD) enhanced by the Exon Junction Complex (EJC)"/>
</dbReference>
<dbReference type="SignaLink" id="Q8TD47"/>
<dbReference type="SIGNOR" id="Q8TD47"/>
<dbReference type="BioGRID-ORCS" id="140032">
    <property type="hits" value="12 hits in 751 CRISPR screens"/>
</dbReference>
<dbReference type="ChiTaRS" id="RPS4Y2">
    <property type="organism name" value="human"/>
</dbReference>
<dbReference type="GenomeRNAi" id="140032"/>
<dbReference type="Pharos" id="Q8TD47">
    <property type="development level" value="Tdark"/>
</dbReference>
<dbReference type="PRO" id="PR:Q8TD47"/>
<dbReference type="Proteomes" id="UP000005640">
    <property type="component" value="Chromosome Y"/>
</dbReference>
<dbReference type="RNAct" id="Q8TD47">
    <property type="molecule type" value="protein"/>
</dbReference>
<dbReference type="Bgee" id="ENSG00000280969">
    <property type="expression patterns" value="Expressed in male germ line stem cell (sensu Vertebrata) in testis and 17 other cell types or tissues"/>
</dbReference>
<dbReference type="GO" id="GO:0022627">
    <property type="term" value="C:cytosolic small ribosomal subunit"/>
    <property type="evidence" value="ECO:0000318"/>
    <property type="project" value="GO_Central"/>
</dbReference>
<dbReference type="GO" id="GO:0003723">
    <property type="term" value="F:RNA binding"/>
    <property type="evidence" value="ECO:0000318"/>
    <property type="project" value="GO_Central"/>
</dbReference>
<dbReference type="GO" id="GO:0019843">
    <property type="term" value="F:rRNA binding"/>
    <property type="evidence" value="ECO:0007669"/>
    <property type="project" value="UniProtKB-KW"/>
</dbReference>
<dbReference type="GO" id="GO:0003735">
    <property type="term" value="F:structural constituent of ribosome"/>
    <property type="evidence" value="ECO:0000318"/>
    <property type="project" value="GO_Central"/>
</dbReference>
<dbReference type="GO" id="GO:0006412">
    <property type="term" value="P:translation"/>
    <property type="evidence" value="ECO:0000318"/>
    <property type="project" value="GO_Central"/>
</dbReference>
<dbReference type="CDD" id="cd06087">
    <property type="entry name" value="KOW_RPS4"/>
    <property type="match status" value="1"/>
</dbReference>
<dbReference type="FunFam" id="2.30.30.30:FF:000005">
    <property type="entry name" value="40S ribosomal protein S4"/>
    <property type="match status" value="1"/>
</dbReference>
<dbReference type="FunFam" id="2.40.50.740:FF:000001">
    <property type="entry name" value="40S ribosomal protein S4"/>
    <property type="match status" value="1"/>
</dbReference>
<dbReference type="FunFam" id="3.10.290.10:FF:000051">
    <property type="entry name" value="40S ribosomal protein S4, X isoform"/>
    <property type="match status" value="1"/>
</dbReference>
<dbReference type="Gene3D" id="2.30.30.30">
    <property type="match status" value="1"/>
</dbReference>
<dbReference type="Gene3D" id="2.40.50.740">
    <property type="match status" value="1"/>
</dbReference>
<dbReference type="Gene3D" id="3.10.290.10">
    <property type="entry name" value="RNA-binding S4 domain"/>
    <property type="match status" value="1"/>
</dbReference>
<dbReference type="HAMAP" id="MF_00485">
    <property type="entry name" value="Ribosomal_eS4"/>
    <property type="match status" value="1"/>
</dbReference>
<dbReference type="InterPro" id="IPR005824">
    <property type="entry name" value="KOW"/>
</dbReference>
<dbReference type="InterPro" id="IPR014722">
    <property type="entry name" value="Rib_uL2_dom2"/>
</dbReference>
<dbReference type="InterPro" id="IPR000876">
    <property type="entry name" value="Ribosomal_eS4"/>
</dbReference>
<dbReference type="InterPro" id="IPR032277">
    <property type="entry name" value="Ribosomal_eS4_C"/>
</dbReference>
<dbReference type="InterPro" id="IPR013845">
    <property type="entry name" value="Ribosomal_eS4_central_region"/>
</dbReference>
<dbReference type="InterPro" id="IPR038237">
    <property type="entry name" value="Ribosomal_eS4_central_sf"/>
</dbReference>
<dbReference type="InterPro" id="IPR041982">
    <property type="entry name" value="Ribosomal_eS4_KOW"/>
</dbReference>
<dbReference type="InterPro" id="IPR013843">
    <property type="entry name" value="Ribosomal_eS4_N"/>
</dbReference>
<dbReference type="InterPro" id="IPR018199">
    <property type="entry name" value="Ribosomal_eS4_N_CS"/>
</dbReference>
<dbReference type="InterPro" id="IPR036986">
    <property type="entry name" value="S4_RNA-bd_sf"/>
</dbReference>
<dbReference type="PANTHER" id="PTHR11581">
    <property type="entry name" value="30S/40S RIBOSOMAL PROTEIN S4"/>
    <property type="match status" value="1"/>
</dbReference>
<dbReference type="PANTHER" id="PTHR11581:SF7">
    <property type="entry name" value="SMALL RIBOSOMAL SUBUNIT PROTEIN ES4, Y ISOFORM 2"/>
    <property type="match status" value="1"/>
</dbReference>
<dbReference type="Pfam" id="PF16121">
    <property type="entry name" value="40S_S4_C"/>
    <property type="match status" value="1"/>
</dbReference>
<dbReference type="Pfam" id="PF00467">
    <property type="entry name" value="KOW"/>
    <property type="match status" value="1"/>
</dbReference>
<dbReference type="Pfam" id="PF00900">
    <property type="entry name" value="Ribosomal_S4e"/>
    <property type="match status" value="1"/>
</dbReference>
<dbReference type="Pfam" id="PF08071">
    <property type="entry name" value="RS4NT"/>
    <property type="match status" value="1"/>
</dbReference>
<dbReference type="PIRSF" id="PIRSF002116">
    <property type="entry name" value="Ribosomal_S4"/>
    <property type="match status" value="1"/>
</dbReference>
<dbReference type="PROSITE" id="PS00528">
    <property type="entry name" value="RIBOSOMAL_S4E"/>
    <property type="match status" value="1"/>
</dbReference>
<dbReference type="PROSITE" id="PS50889">
    <property type="entry name" value="S4"/>
    <property type="match status" value="1"/>
</dbReference>